<keyword id="KW-0067">ATP-binding</keyword>
<keyword id="KW-0963">Cytoplasm</keyword>
<keyword id="KW-0418">Kinase</keyword>
<keyword id="KW-0547">Nucleotide-binding</keyword>
<keyword id="KW-1185">Reference proteome</keyword>
<keyword id="KW-0808">Transferase</keyword>
<sequence length="231" mass="23999">MENGAARTVPAVIVAIDGPSGTGKSSTSKAVAAKLGLSYLDTGAQYRAITWWMVSNGIDITDPTAIAAVAGKPEIISGTDPSAPTITVDGTDVAAPIRTQEVTSKVSAVSAVPEVRTRITELQRSLATSAENGIVVEGRDIGTTVLPDADLKIFLTASPEARAARRSGELKGADVNSTREALLKRDAADSSRKTSPLAKADDAVEVDTSDLTLQQVIECVVTLVEEKRAAK</sequence>
<comment type="catalytic activity">
    <reaction evidence="1">
        <text>CMP + ATP = CDP + ADP</text>
        <dbReference type="Rhea" id="RHEA:11600"/>
        <dbReference type="ChEBI" id="CHEBI:30616"/>
        <dbReference type="ChEBI" id="CHEBI:58069"/>
        <dbReference type="ChEBI" id="CHEBI:60377"/>
        <dbReference type="ChEBI" id="CHEBI:456216"/>
        <dbReference type="EC" id="2.7.4.25"/>
    </reaction>
</comment>
<comment type="catalytic activity">
    <reaction evidence="1">
        <text>dCMP + ATP = dCDP + ADP</text>
        <dbReference type="Rhea" id="RHEA:25094"/>
        <dbReference type="ChEBI" id="CHEBI:30616"/>
        <dbReference type="ChEBI" id="CHEBI:57566"/>
        <dbReference type="ChEBI" id="CHEBI:58593"/>
        <dbReference type="ChEBI" id="CHEBI:456216"/>
        <dbReference type="EC" id="2.7.4.25"/>
    </reaction>
</comment>
<comment type="subcellular location">
    <subcellularLocation>
        <location evidence="1">Cytoplasm</location>
    </subcellularLocation>
</comment>
<comment type="similarity">
    <text evidence="1">Belongs to the cytidylate kinase family. Type 1 subfamily.</text>
</comment>
<proteinExistence type="inferred from homology"/>
<gene>
    <name evidence="1" type="primary">cmk</name>
    <name type="ordered locus">SAV_6522</name>
</gene>
<dbReference type="EC" id="2.7.4.25" evidence="1"/>
<dbReference type="EMBL" id="BA000030">
    <property type="protein sequence ID" value="BAC74233.1"/>
    <property type="molecule type" value="Genomic_DNA"/>
</dbReference>
<dbReference type="RefSeq" id="WP_010987922.1">
    <property type="nucleotide sequence ID" value="NZ_JZJK01000082.1"/>
</dbReference>
<dbReference type="SMR" id="Q828Y9"/>
<dbReference type="GeneID" id="41543596"/>
<dbReference type="KEGG" id="sma:SAVERM_6522"/>
<dbReference type="eggNOG" id="COG0283">
    <property type="taxonomic scope" value="Bacteria"/>
</dbReference>
<dbReference type="HOGENOM" id="CLU_079959_0_0_11"/>
<dbReference type="OrthoDB" id="9807434at2"/>
<dbReference type="Proteomes" id="UP000000428">
    <property type="component" value="Chromosome"/>
</dbReference>
<dbReference type="GO" id="GO:0005829">
    <property type="term" value="C:cytosol"/>
    <property type="evidence" value="ECO:0007669"/>
    <property type="project" value="TreeGrafter"/>
</dbReference>
<dbReference type="GO" id="GO:0005524">
    <property type="term" value="F:ATP binding"/>
    <property type="evidence" value="ECO:0007669"/>
    <property type="project" value="UniProtKB-UniRule"/>
</dbReference>
<dbReference type="GO" id="GO:0036430">
    <property type="term" value="F:CMP kinase activity"/>
    <property type="evidence" value="ECO:0007669"/>
    <property type="project" value="RHEA"/>
</dbReference>
<dbReference type="GO" id="GO:0036431">
    <property type="term" value="F:dCMP kinase activity"/>
    <property type="evidence" value="ECO:0007669"/>
    <property type="project" value="RHEA"/>
</dbReference>
<dbReference type="GO" id="GO:0015949">
    <property type="term" value="P:nucleobase-containing small molecule interconversion"/>
    <property type="evidence" value="ECO:0007669"/>
    <property type="project" value="TreeGrafter"/>
</dbReference>
<dbReference type="GO" id="GO:0006220">
    <property type="term" value="P:pyrimidine nucleotide metabolic process"/>
    <property type="evidence" value="ECO:0007669"/>
    <property type="project" value="UniProtKB-UniRule"/>
</dbReference>
<dbReference type="CDD" id="cd02020">
    <property type="entry name" value="CMPK"/>
    <property type="match status" value="1"/>
</dbReference>
<dbReference type="Gene3D" id="3.40.50.300">
    <property type="entry name" value="P-loop containing nucleotide triphosphate hydrolases"/>
    <property type="match status" value="1"/>
</dbReference>
<dbReference type="HAMAP" id="MF_00238">
    <property type="entry name" value="Cytidyl_kinase_type1"/>
    <property type="match status" value="1"/>
</dbReference>
<dbReference type="InterPro" id="IPR003136">
    <property type="entry name" value="Cytidylate_kin"/>
</dbReference>
<dbReference type="InterPro" id="IPR011994">
    <property type="entry name" value="Cytidylate_kinase_dom"/>
</dbReference>
<dbReference type="InterPro" id="IPR027417">
    <property type="entry name" value="P-loop_NTPase"/>
</dbReference>
<dbReference type="NCBIfam" id="TIGR00017">
    <property type="entry name" value="cmk"/>
    <property type="match status" value="1"/>
</dbReference>
<dbReference type="PANTHER" id="PTHR21299:SF2">
    <property type="entry name" value="CYTIDYLATE KINASE"/>
    <property type="match status" value="1"/>
</dbReference>
<dbReference type="PANTHER" id="PTHR21299">
    <property type="entry name" value="CYTIDYLATE KINASE/PANTOATE-BETA-ALANINE LIGASE"/>
    <property type="match status" value="1"/>
</dbReference>
<dbReference type="Pfam" id="PF02224">
    <property type="entry name" value="Cytidylate_kin"/>
    <property type="match status" value="1"/>
</dbReference>
<dbReference type="SUPFAM" id="SSF52540">
    <property type="entry name" value="P-loop containing nucleoside triphosphate hydrolases"/>
    <property type="match status" value="1"/>
</dbReference>
<reference key="1">
    <citation type="journal article" date="2001" name="Proc. Natl. Acad. Sci. U.S.A.">
        <title>Genome sequence of an industrial microorganism Streptomyces avermitilis: deducing the ability of producing secondary metabolites.</title>
        <authorList>
            <person name="Omura S."/>
            <person name="Ikeda H."/>
            <person name="Ishikawa J."/>
            <person name="Hanamoto A."/>
            <person name="Takahashi C."/>
            <person name="Shinose M."/>
            <person name="Takahashi Y."/>
            <person name="Horikawa H."/>
            <person name="Nakazawa H."/>
            <person name="Osonoe T."/>
            <person name="Kikuchi H."/>
            <person name="Shiba T."/>
            <person name="Sakaki Y."/>
            <person name="Hattori M."/>
        </authorList>
    </citation>
    <scope>NUCLEOTIDE SEQUENCE [LARGE SCALE GENOMIC DNA]</scope>
    <source>
        <strain>ATCC 31267 / DSM 46492 / JCM 5070 / NBRC 14893 / NCIMB 12804 / NRRL 8165 / MA-4680</strain>
    </source>
</reference>
<reference key="2">
    <citation type="journal article" date="2003" name="Nat. Biotechnol.">
        <title>Complete genome sequence and comparative analysis of the industrial microorganism Streptomyces avermitilis.</title>
        <authorList>
            <person name="Ikeda H."/>
            <person name="Ishikawa J."/>
            <person name="Hanamoto A."/>
            <person name="Shinose M."/>
            <person name="Kikuchi H."/>
            <person name="Shiba T."/>
            <person name="Sakaki Y."/>
            <person name="Hattori M."/>
            <person name="Omura S."/>
        </authorList>
    </citation>
    <scope>NUCLEOTIDE SEQUENCE [LARGE SCALE GENOMIC DNA]</scope>
    <source>
        <strain>ATCC 31267 / DSM 46492 / JCM 5070 / NBRC 14893 / NCIMB 12804 / NRRL 8165 / MA-4680</strain>
    </source>
</reference>
<feature type="chain" id="PRO_0000131982" description="Cytidylate kinase">
    <location>
        <begin position="1"/>
        <end position="231"/>
    </location>
</feature>
<feature type="binding site" evidence="1">
    <location>
        <begin position="18"/>
        <end position="26"/>
    </location>
    <ligand>
        <name>ATP</name>
        <dbReference type="ChEBI" id="CHEBI:30616"/>
    </ligand>
</feature>
<name>KCY_STRAW</name>
<organism>
    <name type="scientific">Streptomyces avermitilis (strain ATCC 31267 / DSM 46492 / JCM 5070 / NBRC 14893 / NCIMB 12804 / NRRL 8165 / MA-4680)</name>
    <dbReference type="NCBI Taxonomy" id="227882"/>
    <lineage>
        <taxon>Bacteria</taxon>
        <taxon>Bacillati</taxon>
        <taxon>Actinomycetota</taxon>
        <taxon>Actinomycetes</taxon>
        <taxon>Kitasatosporales</taxon>
        <taxon>Streptomycetaceae</taxon>
        <taxon>Streptomyces</taxon>
    </lineage>
</organism>
<evidence type="ECO:0000255" key="1">
    <source>
        <dbReference type="HAMAP-Rule" id="MF_00238"/>
    </source>
</evidence>
<accession>Q828Y9</accession>
<protein>
    <recommendedName>
        <fullName evidence="1">Cytidylate kinase</fullName>
        <shortName evidence="1">CK</shortName>
        <ecNumber evidence="1">2.7.4.25</ecNumber>
    </recommendedName>
    <alternativeName>
        <fullName evidence="1">Cytidine monophosphate kinase</fullName>
        <shortName evidence="1">CMP kinase</shortName>
    </alternativeName>
</protein>